<keyword id="KW-0256">Endoplasmic reticulum</keyword>
<keyword id="KW-0472">Membrane</keyword>
<keyword id="KW-1185">Reference proteome</keyword>
<keyword id="KW-0812">Transmembrane</keyword>
<keyword id="KW-1133">Transmembrane helix</keyword>
<organism>
    <name type="scientific">Dictyostelium discoideum</name>
    <name type="common">Social amoeba</name>
    <dbReference type="NCBI Taxonomy" id="44689"/>
    <lineage>
        <taxon>Eukaryota</taxon>
        <taxon>Amoebozoa</taxon>
        <taxon>Evosea</taxon>
        <taxon>Eumycetozoa</taxon>
        <taxon>Dictyostelia</taxon>
        <taxon>Dictyosteliales</taxon>
        <taxon>Dictyosteliaceae</taxon>
        <taxon>Dictyostelium</taxon>
    </lineage>
</organism>
<gene>
    <name type="primary">ssr3</name>
    <name type="ORF">DDB_G0267524</name>
</gene>
<proteinExistence type="inferred from homology"/>
<sequence>MAEVDEFSAFRHENDVSIEQRIVYFINSLIVALVPVYLYHAIFFMSIDDHMIIYGSVTLFAAIVLTFAYNNIYRMKRLKLSASREHISIASKNKVGDKKKFAAAQKEVQALVTSHEAIAASIMYNNAVFLICVSIFSFIIFKNVPLVYNYIISISLGAGLTSFLSTSSKH</sequence>
<dbReference type="EMBL" id="AAFI02000003">
    <property type="protein sequence ID" value="EAL73215.1"/>
    <property type="molecule type" value="Genomic_DNA"/>
</dbReference>
<dbReference type="RefSeq" id="XP_647099.1">
    <property type="nucleotide sequence ID" value="XM_642007.1"/>
</dbReference>
<dbReference type="SMR" id="Q55GT5"/>
<dbReference type="FunCoup" id="Q55GT5">
    <property type="interactions" value="277"/>
</dbReference>
<dbReference type="STRING" id="44689.Q55GT5"/>
<dbReference type="PaxDb" id="44689-DDB0266493"/>
<dbReference type="EnsemblProtists" id="EAL73215">
    <property type="protein sequence ID" value="EAL73215"/>
    <property type="gene ID" value="DDB_G0267524"/>
</dbReference>
<dbReference type="GeneID" id="8615903"/>
<dbReference type="KEGG" id="ddi:DDB_G0267524"/>
<dbReference type="dictyBase" id="DDB_G0267524">
    <property type="gene designation" value="ssr3"/>
</dbReference>
<dbReference type="VEuPathDB" id="AmoebaDB:DDB_G0267524"/>
<dbReference type="eggNOG" id="KOG4490">
    <property type="taxonomic scope" value="Eukaryota"/>
</dbReference>
<dbReference type="HOGENOM" id="CLU_1573529_0_0_1"/>
<dbReference type="InParanoid" id="Q55GT5"/>
<dbReference type="OMA" id="PLWLFWR"/>
<dbReference type="PhylomeDB" id="Q55GT5"/>
<dbReference type="PRO" id="PR:Q55GT5"/>
<dbReference type="Proteomes" id="UP000002195">
    <property type="component" value="Chromosome 1"/>
</dbReference>
<dbReference type="GO" id="GO:0005783">
    <property type="term" value="C:endoplasmic reticulum"/>
    <property type="evidence" value="ECO:0000318"/>
    <property type="project" value="GO_Central"/>
</dbReference>
<dbReference type="GO" id="GO:0005789">
    <property type="term" value="C:endoplasmic reticulum membrane"/>
    <property type="evidence" value="ECO:0007669"/>
    <property type="project" value="UniProtKB-SubCell"/>
</dbReference>
<dbReference type="GO" id="GO:0006614">
    <property type="term" value="P:SRP-dependent cotranslational protein targeting to membrane"/>
    <property type="evidence" value="ECO:0007669"/>
    <property type="project" value="InterPro"/>
</dbReference>
<dbReference type="InterPro" id="IPR009779">
    <property type="entry name" value="SSR3"/>
</dbReference>
<dbReference type="PANTHER" id="PTHR13399:SF2">
    <property type="entry name" value="TRANSLOCON-ASSOCIATED PROTEIN SUBUNIT GAMMA"/>
    <property type="match status" value="1"/>
</dbReference>
<dbReference type="PANTHER" id="PTHR13399">
    <property type="entry name" value="TRANSLOCON-ASSOCIATED PROTEIN TRAP , GAMMA SUBUNIT"/>
    <property type="match status" value="1"/>
</dbReference>
<dbReference type="Pfam" id="PF07074">
    <property type="entry name" value="TRAP-gamma"/>
    <property type="match status" value="1"/>
</dbReference>
<name>SSRG_DICDI</name>
<comment type="function">
    <text evidence="1">TRAP proteins are part of a complex whose function is to bind calcium to the ER membrane and thereby regulate the retention of ER resident proteins.</text>
</comment>
<comment type="subunit">
    <text evidence="3">Heterotrimer of TRAP-alpha, TRAP-beta and TRAP-gamma.</text>
</comment>
<comment type="subcellular location">
    <subcellularLocation>
        <location evidence="1">Endoplasmic reticulum membrane</location>
        <topology evidence="1">Multi-pass membrane protein</topology>
    </subcellularLocation>
</comment>
<comment type="similarity">
    <text evidence="3">Belongs to the TRAP-gamma family.</text>
</comment>
<accession>Q55GT5</accession>
<evidence type="ECO:0000250" key="1"/>
<evidence type="ECO:0000255" key="2"/>
<evidence type="ECO:0000305" key="3"/>
<reference key="1">
    <citation type="journal article" date="2005" name="Nature">
        <title>The genome of the social amoeba Dictyostelium discoideum.</title>
        <authorList>
            <person name="Eichinger L."/>
            <person name="Pachebat J.A."/>
            <person name="Gloeckner G."/>
            <person name="Rajandream M.A."/>
            <person name="Sucgang R."/>
            <person name="Berriman M."/>
            <person name="Song J."/>
            <person name="Olsen R."/>
            <person name="Szafranski K."/>
            <person name="Xu Q."/>
            <person name="Tunggal B."/>
            <person name="Kummerfeld S."/>
            <person name="Madera M."/>
            <person name="Konfortov B.A."/>
            <person name="Rivero F."/>
            <person name="Bankier A.T."/>
            <person name="Lehmann R."/>
            <person name="Hamlin N."/>
            <person name="Davies R."/>
            <person name="Gaudet P."/>
            <person name="Fey P."/>
            <person name="Pilcher K."/>
            <person name="Chen G."/>
            <person name="Saunders D."/>
            <person name="Sodergren E.J."/>
            <person name="Davis P."/>
            <person name="Kerhornou A."/>
            <person name="Nie X."/>
            <person name="Hall N."/>
            <person name="Anjard C."/>
            <person name="Hemphill L."/>
            <person name="Bason N."/>
            <person name="Farbrother P."/>
            <person name="Desany B."/>
            <person name="Just E."/>
            <person name="Morio T."/>
            <person name="Rost R."/>
            <person name="Churcher C.M."/>
            <person name="Cooper J."/>
            <person name="Haydock S."/>
            <person name="van Driessche N."/>
            <person name="Cronin A."/>
            <person name="Goodhead I."/>
            <person name="Muzny D.M."/>
            <person name="Mourier T."/>
            <person name="Pain A."/>
            <person name="Lu M."/>
            <person name="Harper D."/>
            <person name="Lindsay R."/>
            <person name="Hauser H."/>
            <person name="James K.D."/>
            <person name="Quiles M."/>
            <person name="Madan Babu M."/>
            <person name="Saito T."/>
            <person name="Buchrieser C."/>
            <person name="Wardroper A."/>
            <person name="Felder M."/>
            <person name="Thangavelu M."/>
            <person name="Johnson D."/>
            <person name="Knights A."/>
            <person name="Loulseged H."/>
            <person name="Mungall K.L."/>
            <person name="Oliver K."/>
            <person name="Price C."/>
            <person name="Quail M.A."/>
            <person name="Urushihara H."/>
            <person name="Hernandez J."/>
            <person name="Rabbinowitsch E."/>
            <person name="Steffen D."/>
            <person name="Sanders M."/>
            <person name="Ma J."/>
            <person name="Kohara Y."/>
            <person name="Sharp S."/>
            <person name="Simmonds M.N."/>
            <person name="Spiegler S."/>
            <person name="Tivey A."/>
            <person name="Sugano S."/>
            <person name="White B."/>
            <person name="Walker D."/>
            <person name="Woodward J.R."/>
            <person name="Winckler T."/>
            <person name="Tanaka Y."/>
            <person name="Shaulsky G."/>
            <person name="Schleicher M."/>
            <person name="Weinstock G.M."/>
            <person name="Rosenthal A."/>
            <person name="Cox E.C."/>
            <person name="Chisholm R.L."/>
            <person name="Gibbs R.A."/>
            <person name="Loomis W.F."/>
            <person name="Platzer M."/>
            <person name="Kay R.R."/>
            <person name="Williams J.G."/>
            <person name="Dear P.H."/>
            <person name="Noegel A.A."/>
            <person name="Barrell B.G."/>
            <person name="Kuspa A."/>
        </authorList>
    </citation>
    <scope>NUCLEOTIDE SEQUENCE [LARGE SCALE GENOMIC DNA]</scope>
    <source>
        <strain>AX4</strain>
    </source>
</reference>
<protein>
    <recommendedName>
        <fullName>Translocon-associated protein subunit gamma</fullName>
        <shortName>TRAP-gamma</shortName>
    </recommendedName>
    <alternativeName>
        <fullName>Signal sequence receptor subunit gamma</fullName>
        <shortName>SSR-gamma</shortName>
    </alternativeName>
</protein>
<feature type="chain" id="PRO_0000328443" description="Translocon-associated protein subunit gamma">
    <location>
        <begin position="1"/>
        <end position="170"/>
    </location>
</feature>
<feature type="topological domain" description="Lumenal" evidence="2">
    <location>
        <begin position="1"/>
        <end position="24"/>
    </location>
</feature>
<feature type="transmembrane region" description="Helical" evidence="2">
    <location>
        <begin position="25"/>
        <end position="45"/>
    </location>
</feature>
<feature type="topological domain" description="Cytoplasmic" evidence="2">
    <location>
        <begin position="46"/>
        <end position="51"/>
    </location>
</feature>
<feature type="transmembrane region" description="Helical" evidence="2">
    <location>
        <begin position="52"/>
        <end position="72"/>
    </location>
</feature>
<feature type="topological domain" description="Lumenal" evidence="2">
    <location>
        <begin position="73"/>
        <end position="121"/>
    </location>
</feature>
<feature type="transmembrane region" description="Helical" evidence="2">
    <location>
        <begin position="122"/>
        <end position="141"/>
    </location>
</feature>
<feature type="topological domain" description="Cytoplasmic" evidence="2">
    <location>
        <begin position="142"/>
        <end position="145"/>
    </location>
</feature>
<feature type="transmembrane region" description="Helical" evidence="2">
    <location>
        <begin position="146"/>
        <end position="168"/>
    </location>
</feature>